<comment type="similarity">
    <text evidence="1">Belongs to the small heat shock protein (HSP20) family.</text>
</comment>
<protein>
    <recommendedName>
        <fullName>16 kDa heat shock protein B</fullName>
    </recommendedName>
</protein>
<evidence type="ECO:0000255" key="1">
    <source>
        <dbReference type="PROSITE-ProRule" id="PRU00285"/>
    </source>
</evidence>
<reference key="1">
    <citation type="journal article" date="1997" name="Mol. Gen. Genet.">
        <title>Characterization and mutagenesis of the leucine biosynthetic genes of Azotobacter vinelandii: an analysis of the rarity of amino acid auxotrophs.</title>
        <authorList>
            <person name="Manna A.C."/>
            <person name="Das H.K."/>
        </authorList>
    </citation>
    <scope>NUCLEOTIDE SEQUENCE [GENOMIC DNA]</scope>
    <source>
        <strain>ATCC 13705 / OP1 / DSM 366 / NCIMB 11614 / LMG 3878 / UW</strain>
    </source>
</reference>
<accession>P96193</accession>
<organism>
    <name type="scientific">Azotobacter vinelandii</name>
    <dbReference type="NCBI Taxonomy" id="354"/>
    <lineage>
        <taxon>Bacteria</taxon>
        <taxon>Pseudomonadati</taxon>
        <taxon>Pseudomonadota</taxon>
        <taxon>Gammaproteobacteria</taxon>
        <taxon>Pseudomonadales</taxon>
        <taxon>Pseudomonadaceae</taxon>
        <taxon>Azotobacter</taxon>
    </lineage>
</organism>
<dbReference type="EMBL" id="Y11280">
    <property type="protein sequence ID" value="CAA72147.1"/>
    <property type="molecule type" value="Genomic_DNA"/>
</dbReference>
<dbReference type="SMR" id="P96193"/>
<dbReference type="CDD" id="cd06470">
    <property type="entry name" value="ACD_IbpA-B_like"/>
    <property type="match status" value="1"/>
</dbReference>
<dbReference type="Gene3D" id="2.60.40.790">
    <property type="match status" value="1"/>
</dbReference>
<dbReference type="InterPro" id="IPR002068">
    <property type="entry name" value="A-crystallin/Hsp20_dom"/>
</dbReference>
<dbReference type="InterPro" id="IPR037913">
    <property type="entry name" value="ACD_IbpA/B"/>
</dbReference>
<dbReference type="InterPro" id="IPR008978">
    <property type="entry name" value="HSP20-like_chaperone"/>
</dbReference>
<dbReference type="PANTHER" id="PTHR47062">
    <property type="match status" value="1"/>
</dbReference>
<dbReference type="PANTHER" id="PTHR47062:SF1">
    <property type="entry name" value="SMALL HEAT SHOCK PROTEIN IBPA"/>
    <property type="match status" value="1"/>
</dbReference>
<dbReference type="Pfam" id="PF00011">
    <property type="entry name" value="HSP20"/>
    <property type="match status" value="1"/>
</dbReference>
<dbReference type="SUPFAM" id="SSF49764">
    <property type="entry name" value="HSP20-like chaperones"/>
    <property type="match status" value="1"/>
</dbReference>
<dbReference type="PROSITE" id="PS01031">
    <property type="entry name" value="SHSP"/>
    <property type="match status" value="1"/>
</dbReference>
<proteinExistence type="inferred from homology"/>
<name>IBPB_AZOVI</name>
<gene>
    <name type="primary">ibpB</name>
</gene>
<sequence>MSAFSMAPLFRQSIGFDRFNDLFESALRNEAGSTYPPYNIEKHGDERYRIVIAAAGFQESDLDVQVERGVLSVSGGKRENRSEGVTYLHQGIAQRAFKLSFRLVDHIEVKGAELRNGLLSIELVRIVPERPAPSAFRSAAAGRPLES</sequence>
<keyword id="KW-0346">Stress response</keyword>
<feature type="chain" id="PRO_0000126039" description="16 kDa heat shock protein B">
    <location>
        <begin position="1"/>
        <end position="147"/>
    </location>
</feature>
<feature type="domain" description="sHSP" evidence="1">
    <location>
        <begin position="29"/>
        <end position="141"/>
    </location>
</feature>